<accession>Q4K6J3</accession>
<organism>
    <name type="scientific">Pseudomonas fluorescens (strain ATCC BAA-477 / NRRL B-23932 / Pf-5)</name>
    <dbReference type="NCBI Taxonomy" id="220664"/>
    <lineage>
        <taxon>Bacteria</taxon>
        <taxon>Pseudomonadati</taxon>
        <taxon>Pseudomonadota</taxon>
        <taxon>Gammaproteobacteria</taxon>
        <taxon>Pseudomonadales</taxon>
        <taxon>Pseudomonadaceae</taxon>
        <taxon>Pseudomonas</taxon>
    </lineage>
</organism>
<feature type="chain" id="PRO_0000225082" description="UDP-N-acetylglucosamine--N-acetylmuramyl-(pentapeptide) pyrophosphoryl-undecaprenol N-acetylglucosamine transferase">
    <location>
        <begin position="1"/>
        <end position="356"/>
    </location>
</feature>
<feature type="binding site" evidence="1">
    <location>
        <begin position="12"/>
        <end position="14"/>
    </location>
    <ligand>
        <name>UDP-N-acetyl-alpha-D-glucosamine</name>
        <dbReference type="ChEBI" id="CHEBI:57705"/>
    </ligand>
</feature>
<feature type="binding site" evidence="1">
    <location>
        <position position="124"/>
    </location>
    <ligand>
        <name>UDP-N-acetyl-alpha-D-glucosamine</name>
        <dbReference type="ChEBI" id="CHEBI:57705"/>
    </ligand>
</feature>
<feature type="binding site" evidence="1">
    <location>
        <position position="163"/>
    </location>
    <ligand>
        <name>UDP-N-acetyl-alpha-D-glucosamine</name>
        <dbReference type="ChEBI" id="CHEBI:57705"/>
    </ligand>
</feature>
<feature type="binding site" evidence="1">
    <location>
        <position position="188"/>
    </location>
    <ligand>
        <name>UDP-N-acetyl-alpha-D-glucosamine</name>
        <dbReference type="ChEBI" id="CHEBI:57705"/>
    </ligand>
</feature>
<feature type="binding site" evidence="1">
    <location>
        <position position="242"/>
    </location>
    <ligand>
        <name>UDP-N-acetyl-alpha-D-glucosamine</name>
        <dbReference type="ChEBI" id="CHEBI:57705"/>
    </ligand>
</feature>
<feature type="binding site" evidence="1">
    <location>
        <begin position="261"/>
        <end position="266"/>
    </location>
    <ligand>
        <name>UDP-N-acetyl-alpha-D-glucosamine</name>
        <dbReference type="ChEBI" id="CHEBI:57705"/>
    </ligand>
</feature>
<feature type="binding site" evidence="1">
    <location>
        <position position="287"/>
    </location>
    <ligand>
        <name>UDP-N-acetyl-alpha-D-glucosamine</name>
        <dbReference type="ChEBI" id="CHEBI:57705"/>
    </ligand>
</feature>
<proteinExistence type="inferred from homology"/>
<keyword id="KW-0131">Cell cycle</keyword>
<keyword id="KW-0132">Cell division</keyword>
<keyword id="KW-0997">Cell inner membrane</keyword>
<keyword id="KW-1003">Cell membrane</keyword>
<keyword id="KW-0133">Cell shape</keyword>
<keyword id="KW-0961">Cell wall biogenesis/degradation</keyword>
<keyword id="KW-0328">Glycosyltransferase</keyword>
<keyword id="KW-0472">Membrane</keyword>
<keyword id="KW-0573">Peptidoglycan synthesis</keyword>
<keyword id="KW-0808">Transferase</keyword>
<dbReference type="EC" id="2.4.1.227" evidence="1"/>
<dbReference type="EMBL" id="CP000076">
    <property type="protein sequence ID" value="AAY94289.1"/>
    <property type="molecule type" value="Genomic_DNA"/>
</dbReference>
<dbReference type="RefSeq" id="WP_011063310.1">
    <property type="nucleotide sequence ID" value="NC_004129.6"/>
</dbReference>
<dbReference type="SMR" id="Q4K6J3"/>
<dbReference type="STRING" id="220664.PFL_5061"/>
<dbReference type="CAZy" id="GT28">
    <property type="family name" value="Glycosyltransferase Family 28"/>
</dbReference>
<dbReference type="KEGG" id="pfl:PFL_5061"/>
<dbReference type="PATRIC" id="fig|220664.5.peg.5179"/>
<dbReference type="eggNOG" id="COG0707">
    <property type="taxonomic scope" value="Bacteria"/>
</dbReference>
<dbReference type="HOGENOM" id="CLU_037404_2_0_6"/>
<dbReference type="UniPathway" id="UPA00219"/>
<dbReference type="Proteomes" id="UP000008540">
    <property type="component" value="Chromosome"/>
</dbReference>
<dbReference type="GO" id="GO:0005886">
    <property type="term" value="C:plasma membrane"/>
    <property type="evidence" value="ECO:0007669"/>
    <property type="project" value="UniProtKB-SubCell"/>
</dbReference>
<dbReference type="GO" id="GO:0051991">
    <property type="term" value="F:UDP-N-acetyl-D-glucosamine:N-acetylmuramoyl-L-alanyl-D-glutamyl-meso-2,6-diaminopimelyl-D-alanyl-D-alanine-diphosphoundecaprenol 4-beta-N-acetylglucosaminlytransferase activity"/>
    <property type="evidence" value="ECO:0007669"/>
    <property type="project" value="RHEA"/>
</dbReference>
<dbReference type="GO" id="GO:0050511">
    <property type="term" value="F:undecaprenyldiphospho-muramoylpentapeptide beta-N-acetylglucosaminyltransferase activity"/>
    <property type="evidence" value="ECO:0007669"/>
    <property type="project" value="UniProtKB-UniRule"/>
</dbReference>
<dbReference type="GO" id="GO:0005975">
    <property type="term" value="P:carbohydrate metabolic process"/>
    <property type="evidence" value="ECO:0007669"/>
    <property type="project" value="InterPro"/>
</dbReference>
<dbReference type="GO" id="GO:0051301">
    <property type="term" value="P:cell division"/>
    <property type="evidence" value="ECO:0007669"/>
    <property type="project" value="UniProtKB-KW"/>
</dbReference>
<dbReference type="GO" id="GO:0071555">
    <property type="term" value="P:cell wall organization"/>
    <property type="evidence" value="ECO:0007669"/>
    <property type="project" value="UniProtKB-KW"/>
</dbReference>
<dbReference type="GO" id="GO:0030259">
    <property type="term" value="P:lipid glycosylation"/>
    <property type="evidence" value="ECO:0007669"/>
    <property type="project" value="UniProtKB-UniRule"/>
</dbReference>
<dbReference type="GO" id="GO:0009252">
    <property type="term" value="P:peptidoglycan biosynthetic process"/>
    <property type="evidence" value="ECO:0007669"/>
    <property type="project" value="UniProtKB-UniRule"/>
</dbReference>
<dbReference type="GO" id="GO:0008360">
    <property type="term" value="P:regulation of cell shape"/>
    <property type="evidence" value="ECO:0007669"/>
    <property type="project" value="UniProtKB-KW"/>
</dbReference>
<dbReference type="CDD" id="cd03785">
    <property type="entry name" value="GT28_MurG"/>
    <property type="match status" value="1"/>
</dbReference>
<dbReference type="Gene3D" id="3.40.50.2000">
    <property type="entry name" value="Glycogen Phosphorylase B"/>
    <property type="match status" value="2"/>
</dbReference>
<dbReference type="HAMAP" id="MF_00033">
    <property type="entry name" value="MurG"/>
    <property type="match status" value="1"/>
</dbReference>
<dbReference type="InterPro" id="IPR006009">
    <property type="entry name" value="GlcNAc_MurG"/>
</dbReference>
<dbReference type="InterPro" id="IPR007235">
    <property type="entry name" value="Glyco_trans_28_C"/>
</dbReference>
<dbReference type="InterPro" id="IPR004276">
    <property type="entry name" value="GlycoTrans_28_N"/>
</dbReference>
<dbReference type="NCBIfam" id="TIGR01133">
    <property type="entry name" value="murG"/>
    <property type="match status" value="1"/>
</dbReference>
<dbReference type="PANTHER" id="PTHR21015:SF22">
    <property type="entry name" value="GLYCOSYLTRANSFERASE"/>
    <property type="match status" value="1"/>
</dbReference>
<dbReference type="PANTHER" id="PTHR21015">
    <property type="entry name" value="UDP-N-ACETYLGLUCOSAMINE--N-ACETYLMURAMYL-(PENTAPEPTIDE) PYROPHOSPHORYL-UNDECAPRENOL N-ACETYLGLUCOSAMINE TRANSFERASE 1"/>
    <property type="match status" value="1"/>
</dbReference>
<dbReference type="Pfam" id="PF04101">
    <property type="entry name" value="Glyco_tran_28_C"/>
    <property type="match status" value="1"/>
</dbReference>
<dbReference type="Pfam" id="PF03033">
    <property type="entry name" value="Glyco_transf_28"/>
    <property type="match status" value="1"/>
</dbReference>
<dbReference type="SUPFAM" id="SSF53756">
    <property type="entry name" value="UDP-Glycosyltransferase/glycogen phosphorylase"/>
    <property type="match status" value="1"/>
</dbReference>
<gene>
    <name evidence="1" type="primary">murG</name>
    <name type="ordered locus">PFL_5061</name>
</gene>
<protein>
    <recommendedName>
        <fullName evidence="1">UDP-N-acetylglucosamine--N-acetylmuramyl-(pentapeptide) pyrophosphoryl-undecaprenol N-acetylglucosamine transferase</fullName>
        <ecNumber evidence="1">2.4.1.227</ecNumber>
    </recommendedName>
    <alternativeName>
        <fullName evidence="1">Undecaprenyl-PP-MurNAc-pentapeptide-UDPGlcNAc GlcNAc transferase</fullName>
    </alternativeName>
</protein>
<name>MURG_PSEF5</name>
<comment type="function">
    <text evidence="1">Cell wall formation. Catalyzes the transfer of a GlcNAc subunit on undecaprenyl-pyrophosphoryl-MurNAc-pentapeptide (lipid intermediate I) to form undecaprenyl-pyrophosphoryl-MurNAc-(pentapeptide)GlcNAc (lipid intermediate II).</text>
</comment>
<comment type="catalytic activity">
    <reaction evidence="1">
        <text>di-trans,octa-cis-undecaprenyl diphospho-N-acetyl-alpha-D-muramoyl-L-alanyl-D-glutamyl-meso-2,6-diaminopimeloyl-D-alanyl-D-alanine + UDP-N-acetyl-alpha-D-glucosamine = di-trans,octa-cis-undecaprenyl diphospho-[N-acetyl-alpha-D-glucosaminyl-(1-&gt;4)]-N-acetyl-alpha-D-muramoyl-L-alanyl-D-glutamyl-meso-2,6-diaminopimeloyl-D-alanyl-D-alanine + UDP + H(+)</text>
        <dbReference type="Rhea" id="RHEA:31227"/>
        <dbReference type="ChEBI" id="CHEBI:15378"/>
        <dbReference type="ChEBI" id="CHEBI:57705"/>
        <dbReference type="ChEBI" id="CHEBI:58223"/>
        <dbReference type="ChEBI" id="CHEBI:61387"/>
        <dbReference type="ChEBI" id="CHEBI:61388"/>
        <dbReference type="EC" id="2.4.1.227"/>
    </reaction>
</comment>
<comment type="pathway">
    <text evidence="1">Cell wall biogenesis; peptidoglycan biosynthesis.</text>
</comment>
<comment type="subcellular location">
    <subcellularLocation>
        <location evidence="1">Cell inner membrane</location>
        <topology evidence="1">Peripheral membrane protein</topology>
        <orientation evidence="1">Cytoplasmic side</orientation>
    </subcellularLocation>
</comment>
<comment type="similarity">
    <text evidence="1">Belongs to the glycosyltransferase 28 family. MurG subfamily.</text>
</comment>
<reference key="1">
    <citation type="journal article" date="2005" name="Nat. Biotechnol.">
        <title>Complete genome sequence of the plant commensal Pseudomonas fluorescens Pf-5.</title>
        <authorList>
            <person name="Paulsen I.T."/>
            <person name="Press C.M."/>
            <person name="Ravel J."/>
            <person name="Kobayashi D.Y."/>
            <person name="Myers G.S.A."/>
            <person name="Mavrodi D.V."/>
            <person name="DeBoy R.T."/>
            <person name="Seshadri R."/>
            <person name="Ren Q."/>
            <person name="Madupu R."/>
            <person name="Dodson R.J."/>
            <person name="Durkin A.S."/>
            <person name="Brinkac L.M."/>
            <person name="Daugherty S.C."/>
            <person name="Sullivan S.A."/>
            <person name="Rosovitz M.J."/>
            <person name="Gwinn M.L."/>
            <person name="Zhou L."/>
            <person name="Schneider D.J."/>
            <person name="Cartinhour S.W."/>
            <person name="Nelson W.C."/>
            <person name="Weidman J."/>
            <person name="Watkins K."/>
            <person name="Tran K."/>
            <person name="Khouri H."/>
            <person name="Pierson E.A."/>
            <person name="Pierson L.S. III"/>
            <person name="Thomashow L.S."/>
            <person name="Loper J.E."/>
        </authorList>
    </citation>
    <scope>NUCLEOTIDE SEQUENCE [LARGE SCALE GENOMIC DNA]</scope>
    <source>
        <strain>ATCC BAA-477 / NRRL B-23932 / Pf-5</strain>
    </source>
</reference>
<sequence length="356" mass="37688">MGANVLIMAGGTGGHVFPALACAREFQARGYTVHWLGTPRGIENDLVPAAGLPLHLINVSGLRGKGKLSLLKAPFVLIKAVLQARRVIRQLKPVCVLGFGGYVTGPGGVAAKLSGVPVIVHEQNAVAGTANRLLVPLAARVCEAFPDTFGASQSRRTTGNPVRTELFLETPREALAGRKARLLILGGSLGAEPLNKLLPEALAQVAPELRPEVFHQAGKNHDEVTAERYRAAGVEAQVQPFIKDMAQAYGWADLVVCRAGALTVSELAAAGLPSMLVPLPHAIDDHQTRNAEYLAREGAAFLMPQRTTGAADLAARLTEVLMQPERLDNMAQAARRLAKPGATHDVVNICLEVAHG</sequence>
<evidence type="ECO:0000255" key="1">
    <source>
        <dbReference type="HAMAP-Rule" id="MF_00033"/>
    </source>
</evidence>